<comment type="function">
    <text evidence="1">Prenyltransferase that catalyzes in vivo the transfer of the heptaprenyl moiety of heptaprenyl pyrophosphate (HepPP; 35 carbon atoms) to the C3 hydroxyl of sn-glycerol-1-phosphate (G1P), producing heptaprenylglyceryl phosphate (HepGP). This reaction is an ether-bond-formation step in the biosynthesis of archaea-type G1P-based membrane lipids found in Bacillales.</text>
</comment>
<comment type="catalytic activity">
    <reaction evidence="1">
        <text>sn-glycerol 1-phosphate + all-trans-heptaprenyl diphosphate = 3-heptaprenyl-sn-glycero-1-phosphate + diphosphate</text>
        <dbReference type="Rhea" id="RHEA:33495"/>
        <dbReference type="ChEBI" id="CHEBI:33019"/>
        <dbReference type="ChEBI" id="CHEBI:57685"/>
        <dbReference type="ChEBI" id="CHEBI:58206"/>
        <dbReference type="ChEBI" id="CHEBI:64781"/>
        <dbReference type="EC" id="2.5.1.n9"/>
    </reaction>
</comment>
<comment type="cofactor">
    <cofactor evidence="1">
        <name>Mg(2+)</name>
        <dbReference type="ChEBI" id="CHEBI:18420"/>
    </cofactor>
</comment>
<comment type="pathway">
    <text evidence="1">Membrane lipid metabolism; glycerophospholipid metabolism.</text>
</comment>
<comment type="subunit">
    <text evidence="1">Homodimer.</text>
</comment>
<comment type="similarity">
    <text evidence="1">Belongs to the GGGP/HepGP synthase family. Group I subfamily.</text>
</comment>
<dbReference type="EC" id="2.5.1.n9" evidence="1"/>
<dbReference type="EMBL" id="AE015929">
    <property type="protein sequence ID" value="AAO05190.1"/>
    <property type="molecule type" value="Genomic_DNA"/>
</dbReference>
<dbReference type="RefSeq" id="NP_765146.1">
    <property type="nucleotide sequence ID" value="NC_004461.1"/>
</dbReference>
<dbReference type="RefSeq" id="WP_001830396.1">
    <property type="nucleotide sequence ID" value="NZ_WBME01000010.1"/>
</dbReference>
<dbReference type="SMR" id="Q8CRT8"/>
<dbReference type="KEGG" id="sep:SE_1591"/>
<dbReference type="PATRIC" id="fig|176280.10.peg.1555"/>
<dbReference type="eggNOG" id="COG1646">
    <property type="taxonomic scope" value="Bacteria"/>
</dbReference>
<dbReference type="HOGENOM" id="CLU_095211_0_0_9"/>
<dbReference type="OrthoDB" id="2381757at2"/>
<dbReference type="UniPathway" id="UPA00940"/>
<dbReference type="Proteomes" id="UP000001411">
    <property type="component" value="Chromosome"/>
</dbReference>
<dbReference type="GO" id="GO:0120536">
    <property type="term" value="F:heptaprenylglyceryl phosphate synthase activity"/>
    <property type="evidence" value="ECO:0007669"/>
    <property type="project" value="RHEA"/>
</dbReference>
<dbReference type="GO" id="GO:0000287">
    <property type="term" value="F:magnesium ion binding"/>
    <property type="evidence" value="ECO:0007669"/>
    <property type="project" value="UniProtKB-UniRule"/>
</dbReference>
<dbReference type="GO" id="GO:0046474">
    <property type="term" value="P:glycerophospholipid biosynthetic process"/>
    <property type="evidence" value="ECO:0007669"/>
    <property type="project" value="UniProtKB-UniRule"/>
</dbReference>
<dbReference type="CDD" id="cd02812">
    <property type="entry name" value="PcrB_like"/>
    <property type="match status" value="1"/>
</dbReference>
<dbReference type="FunFam" id="3.20.20.390:FF:000001">
    <property type="entry name" value="Heptaprenylglyceryl phosphate synthase"/>
    <property type="match status" value="1"/>
</dbReference>
<dbReference type="Gene3D" id="3.20.20.390">
    <property type="entry name" value="FMN-linked oxidoreductases"/>
    <property type="match status" value="1"/>
</dbReference>
<dbReference type="HAMAP" id="MF_00112">
    <property type="entry name" value="GGGP_HepGP_synthase"/>
    <property type="match status" value="1"/>
</dbReference>
<dbReference type="InterPro" id="IPR039074">
    <property type="entry name" value="GGGP/HepGP_synthase_I"/>
</dbReference>
<dbReference type="InterPro" id="IPR038597">
    <property type="entry name" value="GGGP/HepGP_synthase_sf"/>
</dbReference>
<dbReference type="InterPro" id="IPR008205">
    <property type="entry name" value="GGGP_HepGP_synthase"/>
</dbReference>
<dbReference type="NCBIfam" id="TIGR01768">
    <property type="entry name" value="GGGP-family"/>
    <property type="match status" value="1"/>
</dbReference>
<dbReference type="NCBIfam" id="NF003197">
    <property type="entry name" value="PRK04169.1-1"/>
    <property type="match status" value="1"/>
</dbReference>
<dbReference type="NCBIfam" id="NF003199">
    <property type="entry name" value="PRK04169.1-3"/>
    <property type="match status" value="1"/>
</dbReference>
<dbReference type="NCBIfam" id="NF003200">
    <property type="entry name" value="PRK04169.1-4"/>
    <property type="match status" value="1"/>
</dbReference>
<dbReference type="PANTHER" id="PTHR40029">
    <property type="match status" value="1"/>
</dbReference>
<dbReference type="PANTHER" id="PTHR40029:SF2">
    <property type="entry name" value="HEPTAPRENYLGLYCERYL PHOSPHATE SYNTHASE"/>
    <property type="match status" value="1"/>
</dbReference>
<dbReference type="Pfam" id="PF01884">
    <property type="entry name" value="PcrB"/>
    <property type="match status" value="1"/>
</dbReference>
<dbReference type="SUPFAM" id="SSF51395">
    <property type="entry name" value="FMN-linked oxidoreductases"/>
    <property type="match status" value="1"/>
</dbReference>
<keyword id="KW-0444">Lipid biosynthesis</keyword>
<keyword id="KW-0443">Lipid metabolism</keyword>
<keyword id="KW-0460">Magnesium</keyword>
<keyword id="KW-0479">Metal-binding</keyword>
<keyword id="KW-0594">Phospholipid biosynthesis</keyword>
<keyword id="KW-1208">Phospholipid metabolism</keyword>
<keyword id="KW-0808">Transferase</keyword>
<protein>
    <recommendedName>
        <fullName evidence="1">Heptaprenylglyceryl phosphate synthase</fullName>
        <shortName evidence="1">HepGP synthase</shortName>
        <ecNumber evidence="1">2.5.1.n9</ecNumber>
    </recommendedName>
    <alternativeName>
        <fullName evidence="1">Glycerol-1-phosphate heptaprenyltransferase</fullName>
    </alternativeName>
</protein>
<reference key="1">
    <citation type="journal article" date="2003" name="Mol. Microbiol.">
        <title>Genome-based analysis of virulence genes in a non-biofilm-forming Staphylococcus epidermidis strain (ATCC 12228).</title>
        <authorList>
            <person name="Zhang Y.-Q."/>
            <person name="Ren S.-X."/>
            <person name="Li H.-L."/>
            <person name="Wang Y.-X."/>
            <person name="Fu G."/>
            <person name="Yang J."/>
            <person name="Qin Z.-Q."/>
            <person name="Miao Y.-G."/>
            <person name="Wang W.-Y."/>
            <person name="Chen R.-S."/>
            <person name="Shen Y."/>
            <person name="Chen Z."/>
            <person name="Yuan Z.-H."/>
            <person name="Zhao G.-P."/>
            <person name="Qu D."/>
            <person name="Danchin A."/>
            <person name="Wen Y.-M."/>
        </authorList>
    </citation>
    <scope>NUCLEOTIDE SEQUENCE [LARGE SCALE GENOMIC DNA]</scope>
    <source>
        <strain>ATCC 12228 / FDA PCI 1200</strain>
    </source>
</reference>
<evidence type="ECO:0000255" key="1">
    <source>
        <dbReference type="HAMAP-Rule" id="MF_00112"/>
    </source>
</evidence>
<gene>
    <name evidence="1" type="primary">pcrB</name>
    <name type="ordered locus">SE_1591</name>
</gene>
<accession>Q8CRT8</accession>
<proteinExistence type="inferred from homology"/>
<name>PCRB_STAES</name>
<organism>
    <name type="scientific">Staphylococcus epidermidis (strain ATCC 12228 / FDA PCI 1200)</name>
    <dbReference type="NCBI Taxonomy" id="176280"/>
    <lineage>
        <taxon>Bacteria</taxon>
        <taxon>Bacillati</taxon>
        <taxon>Bacillota</taxon>
        <taxon>Bacilli</taxon>
        <taxon>Bacillales</taxon>
        <taxon>Staphylococcaceae</taxon>
        <taxon>Staphylococcus</taxon>
    </lineage>
</organism>
<sequence>MYDITKWKHMFKLDPAKSISDENLEALCMSNTDAIIIGGTDDVTEDNVIHLMSRVRRYPLPLVLEVSNVESVMPGFDFYFIPTVMNSKDTKYHNEILLEALKKYGHVINFDEVFFEGYVVLNANSKVAKITKAYTQLGIEDVEAYAQMAEELYRFPIMYVEYSGTYGDVDKVKAIANMLQHTQLFYGGGITNIDKANEMSNIADTIVVGDIIYNDIKKALKTVKIKESNK</sequence>
<feature type="chain" id="PRO_0000138724" description="Heptaprenylglyceryl phosphate synthase">
    <location>
        <begin position="1"/>
        <end position="230"/>
    </location>
</feature>
<feature type="binding site" evidence="1">
    <location>
        <position position="12"/>
    </location>
    <ligand>
        <name>sn-glycerol 1-phosphate</name>
        <dbReference type="ChEBI" id="CHEBI:57685"/>
    </ligand>
</feature>
<feature type="binding site" evidence="1">
    <location>
        <position position="14"/>
    </location>
    <ligand>
        <name>Mg(2+)</name>
        <dbReference type="ChEBI" id="CHEBI:18420"/>
    </ligand>
</feature>
<feature type="binding site" evidence="1">
    <location>
        <position position="40"/>
    </location>
    <ligand>
        <name>Mg(2+)</name>
        <dbReference type="ChEBI" id="CHEBI:18420"/>
    </ligand>
</feature>
<feature type="binding site" evidence="1">
    <location>
        <begin position="159"/>
        <end position="164"/>
    </location>
    <ligand>
        <name>sn-glycerol 1-phosphate</name>
        <dbReference type="ChEBI" id="CHEBI:57685"/>
    </ligand>
</feature>
<feature type="binding site" evidence="1">
    <location>
        <position position="189"/>
    </location>
    <ligand>
        <name>sn-glycerol 1-phosphate</name>
        <dbReference type="ChEBI" id="CHEBI:57685"/>
    </ligand>
</feature>
<feature type="binding site" evidence="1">
    <location>
        <begin position="209"/>
        <end position="210"/>
    </location>
    <ligand>
        <name>sn-glycerol 1-phosphate</name>
        <dbReference type="ChEBI" id="CHEBI:57685"/>
    </ligand>
</feature>